<organism>
    <name type="scientific">Loxosceles boneti</name>
    <name type="common">North American fiddleback spider</name>
    <dbReference type="NCBI Taxonomy" id="283164"/>
    <lineage>
        <taxon>Eukaryota</taxon>
        <taxon>Metazoa</taxon>
        <taxon>Ecdysozoa</taxon>
        <taxon>Arthropoda</taxon>
        <taxon>Chelicerata</taxon>
        <taxon>Arachnida</taxon>
        <taxon>Araneae</taxon>
        <taxon>Araneomorphae</taxon>
        <taxon>Haplogynae</taxon>
        <taxon>Scytodoidea</taxon>
        <taxon>Sicariidae</taxon>
        <taxon>Loxosceles</taxon>
    </lineage>
</organism>
<evidence type="ECO:0000250" key="1">
    <source>
        <dbReference type="UniProtKB" id="A0A0D4WTV1"/>
    </source>
</evidence>
<evidence type="ECO:0000250" key="2">
    <source>
        <dbReference type="UniProtKB" id="A0A0D4WV12"/>
    </source>
</evidence>
<evidence type="ECO:0000250" key="3">
    <source>
        <dbReference type="UniProtKB" id="P0CE80"/>
    </source>
</evidence>
<evidence type="ECO:0000250" key="4">
    <source>
        <dbReference type="UniProtKB" id="Q4ZFU2"/>
    </source>
</evidence>
<evidence type="ECO:0000250" key="5">
    <source>
        <dbReference type="UniProtKB" id="Q8I914"/>
    </source>
</evidence>
<evidence type="ECO:0000255" key="6"/>
<evidence type="ECO:0000269" key="7">
    <source>
    </source>
</evidence>
<evidence type="ECO:0000303" key="8">
    <source>
    </source>
</evidence>
<evidence type="ECO:0000305" key="9"/>
<evidence type="ECO:0000305" key="10">
    <source>
    </source>
</evidence>
<evidence type="ECO:0000305" key="11">
    <source>
    </source>
</evidence>
<feature type="chain" id="PRO_0000279556" description="Dermonecrotic toxin LbSicTox-betaIA1a" evidence="10">
    <location>
        <begin position="1"/>
        <end position="278"/>
    </location>
</feature>
<feature type="active site" evidence="5">
    <location>
        <position position="12"/>
    </location>
</feature>
<feature type="active site" description="Nucleophile" evidence="5">
    <location>
        <position position="48"/>
    </location>
</feature>
<feature type="binding site" evidence="5">
    <location>
        <position position="32"/>
    </location>
    <ligand>
        <name>Mg(2+)</name>
        <dbReference type="ChEBI" id="CHEBI:18420"/>
    </ligand>
</feature>
<feature type="binding site" evidence="5">
    <location>
        <position position="34"/>
    </location>
    <ligand>
        <name>Mg(2+)</name>
        <dbReference type="ChEBI" id="CHEBI:18420"/>
    </ligand>
</feature>
<feature type="binding site" evidence="5">
    <location>
        <position position="92"/>
    </location>
    <ligand>
        <name>Mg(2+)</name>
        <dbReference type="ChEBI" id="CHEBI:18420"/>
    </ligand>
</feature>
<feature type="site" description="May prevent sphingomyelin recognition" evidence="11">
    <location>
        <position position="96"/>
    </location>
</feature>
<feature type="site" description="May prevent sphingomyelin recognition" evidence="11">
    <location>
        <position position="135"/>
    </location>
</feature>
<feature type="glycosylation site" description="N-linked (GlcNAc...) asparagine" evidence="6">
    <location>
        <position position="258"/>
    </location>
</feature>
<feature type="disulfide bond" evidence="3">
    <location>
        <begin position="52"/>
        <end position="58"/>
    </location>
</feature>
<feature type="disulfide bond" evidence="3">
    <location>
        <begin position="54"/>
        <end position="197"/>
    </location>
</feature>
<protein>
    <recommendedName>
        <fullName>Dermonecrotic toxin LbSicTox-betaIA1a</fullName>
        <ecNumber evidence="4">4.6.1.-</ecNumber>
    </recommendedName>
    <alternativeName>
        <fullName evidence="8">Lb3</fullName>
    </alternativeName>
    <alternativeName>
        <fullName>Phospholipase D-like</fullName>
        <shortName>PLD-like</shortName>
    </alternativeName>
    <alternativeName>
        <fullName>Sphingomyelin phosphodiesterase D-like protein 3</fullName>
    </alternativeName>
    <alternativeName>
        <fullName>Sphingomyelinase D-like</fullName>
    </alternativeName>
</protein>
<comment type="function">
    <text evidence="1">This toxin does not show activity on sphingomyelin (SM) and does not show dermonecrotic activities (PubMed:15450925). This toxin is a member of dermonecrotic toxins that cleave the phosphodiester linkage between the phosphate and headgroup of certain phospholipids (sphingolipid and lysolipid substrates), forming an alcohol (often choline) and a cyclic phosphate (By similarity). It may act on ceramide phosphoethanolamine (CPE), lysophosphatidylcholine (LPC) and lysophosphatidylethanolamine (LPE), but not on lysophosphatidylserine (LPS), and lysophosphatidylglycerol (LPG) (By similarity). It may act by transphosphatidylation, releasing exclusively cyclic phosphate products as second products (By similarity).</text>
</comment>
<comment type="catalytic activity">
    <reaction evidence="1">
        <text>an N-(acyl)-sphingosylphosphoethanolamine = an N-(acyl)-sphingosyl-1,3-cyclic phosphate + ethanolamine</text>
        <dbReference type="Rhea" id="RHEA:60648"/>
        <dbReference type="ChEBI" id="CHEBI:57603"/>
        <dbReference type="ChEBI" id="CHEBI:143891"/>
        <dbReference type="ChEBI" id="CHEBI:143892"/>
    </reaction>
</comment>
<comment type="catalytic activity">
    <reaction evidence="1">
        <text>a 1-acyl-sn-glycero-3-phosphocholine = a 1-acyl-sn-glycero-2,3-cyclic phosphate + choline</text>
        <dbReference type="Rhea" id="RHEA:60700"/>
        <dbReference type="ChEBI" id="CHEBI:15354"/>
        <dbReference type="ChEBI" id="CHEBI:58168"/>
        <dbReference type="ChEBI" id="CHEBI:143947"/>
    </reaction>
</comment>
<comment type="catalytic activity">
    <reaction evidence="1">
        <text>a 1-acyl-sn-glycero-3-phosphoethanolamine = a 1-acyl-sn-glycero-2,3-cyclic phosphate + ethanolamine</text>
        <dbReference type="Rhea" id="RHEA:60704"/>
        <dbReference type="ChEBI" id="CHEBI:57603"/>
        <dbReference type="ChEBI" id="CHEBI:64381"/>
        <dbReference type="ChEBI" id="CHEBI:143947"/>
    </reaction>
</comment>
<comment type="subcellular location">
    <subcellularLocation>
        <location evidence="7">Secreted</location>
    </subcellularLocation>
</comment>
<comment type="tissue specificity">
    <text evidence="10">Expressed by the venom gland.</text>
</comment>
<comment type="similarity">
    <text evidence="9">Belongs to the arthropod phospholipase D family. Class II subfamily. Class IIb sub-subfamily.</text>
</comment>
<comment type="caution">
    <text evidence="1 2 4">The most common activity assay for dermonecrotic toxins detects enzymatic activity by monitoring choline release from substrate. Liberation of choline from sphingomyelin (SM) or lysophosphatidylcholine (LPC) is commonly assumed to result from substrate hydrolysis, giving either ceramide-1-phosphate (C1P) or lysophosphatidic acid (LPA), respectively, as a second product. However, two studies from Lajoie and colleagues (2013 and 2015) report the observation of exclusive formation of cyclic phosphate products as second products, resulting from intramolecular transphosphatidylation. Cyclic phosphates have vastly different biological properties from their monoester counterparts, and they may be relevant to the pathology of brown spider envenomation.</text>
</comment>
<dbReference type="EC" id="4.6.1.-" evidence="4"/>
<dbReference type="EMBL" id="AY559845">
    <property type="protein sequence ID" value="AAT66074.1"/>
    <property type="molecule type" value="mRNA"/>
</dbReference>
<dbReference type="ArachnoServer" id="AS000151">
    <property type="toxin name" value="Sphingomyelinase D (LbSicTox-betaIA1a)"/>
</dbReference>
<dbReference type="BRENDA" id="3.1.4.41">
    <property type="organism ID" value="8288"/>
</dbReference>
<dbReference type="GO" id="GO:0005576">
    <property type="term" value="C:extracellular region"/>
    <property type="evidence" value="ECO:0007669"/>
    <property type="project" value="UniProtKB-SubCell"/>
</dbReference>
<dbReference type="GO" id="GO:0016829">
    <property type="term" value="F:lyase activity"/>
    <property type="evidence" value="ECO:0007669"/>
    <property type="project" value="UniProtKB-KW"/>
</dbReference>
<dbReference type="GO" id="GO:0046872">
    <property type="term" value="F:metal ion binding"/>
    <property type="evidence" value="ECO:0007669"/>
    <property type="project" value="UniProtKB-KW"/>
</dbReference>
<dbReference type="GO" id="GO:0008081">
    <property type="term" value="F:phosphoric diester hydrolase activity"/>
    <property type="evidence" value="ECO:0007669"/>
    <property type="project" value="InterPro"/>
</dbReference>
<dbReference type="GO" id="GO:0006629">
    <property type="term" value="P:lipid metabolic process"/>
    <property type="evidence" value="ECO:0007669"/>
    <property type="project" value="InterPro"/>
</dbReference>
<dbReference type="CDD" id="cd08576">
    <property type="entry name" value="GDPD_like_SMaseD_PLD"/>
    <property type="match status" value="1"/>
</dbReference>
<dbReference type="Gene3D" id="3.20.20.190">
    <property type="entry name" value="Phosphatidylinositol (PI) phosphodiesterase"/>
    <property type="match status" value="1"/>
</dbReference>
<dbReference type="InterPro" id="IPR017946">
    <property type="entry name" value="PLC-like_Pdiesterase_TIM-brl"/>
</dbReference>
<dbReference type="Pfam" id="PF13653">
    <property type="entry name" value="GDPD_2"/>
    <property type="match status" value="1"/>
</dbReference>
<dbReference type="SUPFAM" id="SSF51695">
    <property type="entry name" value="PLC-like phosphodiesterases"/>
    <property type="match status" value="1"/>
</dbReference>
<keyword id="KW-0903">Direct protein sequencing</keyword>
<keyword id="KW-1015">Disulfide bond</keyword>
<keyword id="KW-0325">Glycoprotein</keyword>
<keyword id="KW-0456">Lyase</keyword>
<keyword id="KW-0460">Magnesium</keyword>
<keyword id="KW-0479">Metal-binding</keyword>
<keyword id="KW-0964">Secreted</keyword>
<accession>Q5YD76</accession>
<name>B1HA_LOXBO</name>
<reference key="1">
    <citation type="journal article" date="2004" name="Toxicon">
        <title>Genetic and enzymatic characterization of sphingomyelinase D isoforms from the North American fiddleback spiders Loxosceles boneti and Loxosceles reclusa.</title>
        <authorList>
            <person name="Ramos-Cerrillo B."/>
            <person name="Olvera A."/>
            <person name="Odell G.V."/>
            <person name="Zamudio F."/>
            <person name="Paniagua-Solis J."/>
            <person name="Alagon A."/>
            <person name="Stock R.P."/>
        </authorList>
    </citation>
    <scope>NUCLEOTIDE SEQUENCE [MRNA] OF 3-278</scope>
    <scope>PROTEIN SEQUENCE OF 1-24</scope>
    <scope>FUNCTION</scope>
    <scope>SUBCELLULAR LOCATION</scope>
    <source>
        <tissue>Venom</tissue>
        <tissue>Venom gland</tissue>
    </source>
</reference>
<reference key="2">
    <citation type="journal article" date="2006" name="Biochem. Biophys. Res. Commun.">
        <title>Structural insights into the catalytic mechanism of sphingomyelinases D and evolutionary relationship to glycerophosphodiester phosphodiesterases.</title>
        <authorList>
            <person name="Murakami M.T."/>
            <person name="Fernandes-Pedrosa M.F."/>
            <person name="de Andrade S.A."/>
            <person name="Gabdoulkhakov A."/>
            <person name="Betzel C."/>
            <person name="Tambourgi D.V."/>
            <person name="Arni R.K."/>
        </authorList>
    </citation>
    <scope>IMPORTANT SITES FOR ACTIVITY ON SPHINGOMYELIN</scope>
</reference>
<sequence length="278" mass="31713">AXRPKPIWDVAHMVNDLELVDEYLGDGANGLELDVAFSDDGTAEKMYHGVPCDCFRSCKRTETFTKYMDYIRELTTPGNSKFNNNLILLIMDLKLNGIEPNVAYAAGKSVAEKLLSSYWQNGESGARAYIVLSLETITRPEFINGFRDAIKASGHEELFEKIGWDFSGNEDLGDIRRVYQKYGIDEHIWQGDGITNCLPRGDYRLTEAMKKKNDPDYKYTEKVYTWSIDKEASIRNALRLGVDAVMTNYPARVKSILNESEFSSTHRMATYEDNPWQK</sequence>
<proteinExistence type="evidence at protein level"/>